<keyword id="KW-0067">ATP-binding</keyword>
<keyword id="KW-1015">Disulfide bond</keyword>
<keyword id="KW-0418">Kinase</keyword>
<keyword id="KW-0460">Magnesium</keyword>
<keyword id="KW-0547">Nucleotide-binding</keyword>
<keyword id="KW-0684">Rhamnose metabolism</keyword>
<keyword id="KW-0808">Transferase</keyword>
<dbReference type="EC" id="2.7.1.5" evidence="1"/>
<dbReference type="EMBL" id="AM933173">
    <property type="protein sequence ID" value="CAR39167.1"/>
    <property type="molecule type" value="Genomic_DNA"/>
</dbReference>
<dbReference type="RefSeq" id="WP_000143967.1">
    <property type="nucleotide sequence ID" value="NC_011274.1"/>
</dbReference>
<dbReference type="SMR" id="B5RFC4"/>
<dbReference type="KEGG" id="seg:SG3374"/>
<dbReference type="HOGENOM" id="CLU_039395_0_0_6"/>
<dbReference type="UniPathway" id="UPA00541">
    <property type="reaction ID" value="UER00602"/>
</dbReference>
<dbReference type="Proteomes" id="UP000008321">
    <property type="component" value="Chromosome"/>
</dbReference>
<dbReference type="GO" id="GO:0005829">
    <property type="term" value="C:cytosol"/>
    <property type="evidence" value="ECO:0007669"/>
    <property type="project" value="TreeGrafter"/>
</dbReference>
<dbReference type="GO" id="GO:0005524">
    <property type="term" value="F:ATP binding"/>
    <property type="evidence" value="ECO:0007669"/>
    <property type="project" value="UniProtKB-KW"/>
</dbReference>
<dbReference type="GO" id="GO:0004370">
    <property type="term" value="F:glycerol kinase activity"/>
    <property type="evidence" value="ECO:0007669"/>
    <property type="project" value="TreeGrafter"/>
</dbReference>
<dbReference type="GO" id="GO:0008993">
    <property type="term" value="F:rhamnulokinase activity"/>
    <property type="evidence" value="ECO:0007669"/>
    <property type="project" value="UniProtKB-UniRule"/>
</dbReference>
<dbReference type="GO" id="GO:0006071">
    <property type="term" value="P:glycerol metabolic process"/>
    <property type="evidence" value="ECO:0007669"/>
    <property type="project" value="TreeGrafter"/>
</dbReference>
<dbReference type="GO" id="GO:0019301">
    <property type="term" value="P:rhamnose catabolic process"/>
    <property type="evidence" value="ECO:0007669"/>
    <property type="project" value="UniProtKB-UniRule"/>
</dbReference>
<dbReference type="CDD" id="cd07771">
    <property type="entry name" value="ASKHA_NBD_FGGY_RhaB-like"/>
    <property type="match status" value="1"/>
</dbReference>
<dbReference type="FunFam" id="3.30.420.40:FF:000064">
    <property type="entry name" value="Rhamnulokinase"/>
    <property type="match status" value="1"/>
</dbReference>
<dbReference type="FunFam" id="3.30.420.40:FF:000073">
    <property type="entry name" value="Rhamnulokinase"/>
    <property type="match status" value="1"/>
</dbReference>
<dbReference type="Gene3D" id="3.30.420.40">
    <property type="match status" value="2"/>
</dbReference>
<dbReference type="HAMAP" id="MF_01535">
    <property type="entry name" value="Rhamnulokinase"/>
    <property type="match status" value="1"/>
</dbReference>
<dbReference type="InterPro" id="IPR043129">
    <property type="entry name" value="ATPase_NBD"/>
</dbReference>
<dbReference type="InterPro" id="IPR018485">
    <property type="entry name" value="FGGY_C"/>
</dbReference>
<dbReference type="InterPro" id="IPR018484">
    <property type="entry name" value="FGGY_N"/>
</dbReference>
<dbReference type="InterPro" id="IPR013449">
    <property type="entry name" value="Rhamnulokinase"/>
</dbReference>
<dbReference type="NCBIfam" id="NF007925">
    <property type="entry name" value="PRK10640.1"/>
    <property type="match status" value="1"/>
</dbReference>
<dbReference type="NCBIfam" id="TIGR02627">
    <property type="entry name" value="rhamnulo_kin"/>
    <property type="match status" value="1"/>
</dbReference>
<dbReference type="PANTHER" id="PTHR10196:SF93">
    <property type="entry name" value="L-RHAMNULOKINASE"/>
    <property type="match status" value="1"/>
</dbReference>
<dbReference type="PANTHER" id="PTHR10196">
    <property type="entry name" value="SUGAR KINASE"/>
    <property type="match status" value="1"/>
</dbReference>
<dbReference type="Pfam" id="PF02782">
    <property type="entry name" value="FGGY_C"/>
    <property type="match status" value="1"/>
</dbReference>
<dbReference type="Pfam" id="PF00370">
    <property type="entry name" value="FGGY_N"/>
    <property type="match status" value="1"/>
</dbReference>
<dbReference type="SUPFAM" id="SSF53067">
    <property type="entry name" value="Actin-like ATPase domain"/>
    <property type="match status" value="2"/>
</dbReference>
<reference key="1">
    <citation type="journal article" date="2008" name="Genome Res.">
        <title>Comparative genome analysis of Salmonella enteritidis PT4 and Salmonella gallinarum 287/91 provides insights into evolutionary and host adaptation pathways.</title>
        <authorList>
            <person name="Thomson N.R."/>
            <person name="Clayton D.J."/>
            <person name="Windhorst D."/>
            <person name="Vernikos G."/>
            <person name="Davidson S."/>
            <person name="Churcher C."/>
            <person name="Quail M.A."/>
            <person name="Stevens M."/>
            <person name="Jones M.A."/>
            <person name="Watson M."/>
            <person name="Barron A."/>
            <person name="Layton A."/>
            <person name="Pickard D."/>
            <person name="Kingsley R.A."/>
            <person name="Bignell A."/>
            <person name="Clark L."/>
            <person name="Harris B."/>
            <person name="Ormond D."/>
            <person name="Abdellah Z."/>
            <person name="Brooks K."/>
            <person name="Cherevach I."/>
            <person name="Chillingworth T."/>
            <person name="Woodward J."/>
            <person name="Norberczak H."/>
            <person name="Lord A."/>
            <person name="Arrowsmith C."/>
            <person name="Jagels K."/>
            <person name="Moule S."/>
            <person name="Mungall K."/>
            <person name="Saunders M."/>
            <person name="Whitehead S."/>
            <person name="Chabalgoity J.A."/>
            <person name="Maskell D."/>
            <person name="Humphreys T."/>
            <person name="Roberts M."/>
            <person name="Barrow P.A."/>
            <person name="Dougan G."/>
            <person name="Parkhill J."/>
        </authorList>
    </citation>
    <scope>NUCLEOTIDE SEQUENCE [LARGE SCALE GENOMIC DNA]</scope>
    <source>
        <strain>287/91 / NCTC 13346</strain>
    </source>
</reference>
<accession>B5RFC4</accession>
<evidence type="ECO:0000255" key="1">
    <source>
        <dbReference type="HAMAP-Rule" id="MF_01535"/>
    </source>
</evidence>
<organism>
    <name type="scientific">Salmonella gallinarum (strain 287/91 / NCTC 13346)</name>
    <dbReference type="NCBI Taxonomy" id="550538"/>
    <lineage>
        <taxon>Bacteria</taxon>
        <taxon>Pseudomonadati</taxon>
        <taxon>Pseudomonadota</taxon>
        <taxon>Gammaproteobacteria</taxon>
        <taxon>Enterobacterales</taxon>
        <taxon>Enterobacteriaceae</taxon>
        <taxon>Salmonella</taxon>
    </lineage>
</organism>
<gene>
    <name evidence="1" type="primary">rhaB</name>
    <name type="ordered locus">SG3374</name>
</gene>
<name>RHAB_SALG2</name>
<protein>
    <recommendedName>
        <fullName evidence="1">Rhamnulokinase</fullName>
        <shortName evidence="1">RhaB</shortName>
        <ecNumber evidence="1">2.7.1.5</ecNumber>
    </recommendedName>
    <alternativeName>
        <fullName evidence="1">ATP:L-rhamnulose phosphotransferase</fullName>
    </alternativeName>
    <alternativeName>
        <fullName evidence="1">L-rhamnulose 1-kinase</fullName>
    </alternativeName>
    <alternativeName>
        <fullName evidence="1">Rhamnulose kinase</fullName>
    </alternativeName>
</protein>
<proteinExistence type="inferred from homology"/>
<feature type="chain" id="PRO_1000146551" description="Rhamnulokinase">
    <location>
        <begin position="1"/>
        <end position="489"/>
    </location>
</feature>
<feature type="active site" description="Proton acceptor" evidence="1">
    <location>
        <position position="237"/>
    </location>
</feature>
<feature type="binding site" evidence="1">
    <location>
        <begin position="13"/>
        <end position="17"/>
    </location>
    <ligand>
        <name>ATP</name>
        <dbReference type="ChEBI" id="CHEBI:30616"/>
    </ligand>
</feature>
<feature type="binding site" evidence="1">
    <location>
        <position position="83"/>
    </location>
    <ligand>
        <name>substrate</name>
    </ligand>
</feature>
<feature type="binding site" evidence="1">
    <location>
        <begin position="236"/>
        <end position="238"/>
    </location>
    <ligand>
        <name>substrate</name>
    </ligand>
</feature>
<feature type="binding site" evidence="1">
    <location>
        <position position="259"/>
    </location>
    <ligand>
        <name>ATP</name>
        <dbReference type="ChEBI" id="CHEBI:30616"/>
    </ligand>
</feature>
<feature type="binding site" evidence="1">
    <location>
        <position position="296"/>
    </location>
    <ligand>
        <name>substrate</name>
    </ligand>
</feature>
<feature type="binding site" evidence="1">
    <location>
        <position position="304"/>
    </location>
    <ligand>
        <name>ATP</name>
        <dbReference type="ChEBI" id="CHEBI:30616"/>
    </ligand>
</feature>
<feature type="binding site" evidence="1">
    <location>
        <position position="402"/>
    </location>
    <ligand>
        <name>ATP</name>
        <dbReference type="ChEBI" id="CHEBI:30616"/>
    </ligand>
</feature>
<feature type="disulfide bond" evidence="1">
    <location>
        <begin position="68"/>
        <end position="222"/>
    </location>
</feature>
<feature type="disulfide bond" evidence="1">
    <location>
        <begin position="353"/>
        <end position="370"/>
    </location>
</feature>
<feature type="disulfide bond" evidence="1">
    <location>
        <begin position="413"/>
        <end position="417"/>
    </location>
</feature>
<sequence length="489" mass="54563">MTFRHCVAVDLGASSGRVMLARYDSKHRTLTLREIHRFVNCLQKTDGFDTWDIDSLEKDIRLGLKKVCNEGILIDSIGIDTWGVDYVLLDKQGQRVGLPVSYRDNRTTGIMPQALVQIGKSEIYRRSGIQFLPFNTIYQLRALTKQQPELTAQVAHALLMPDYFSYRLTGEMNWEYTNATTTQLVNINTDDWDDTLLAWTGAKKSWFGRPSHPGNVIGDWICPQGNRIPVVAVASHDTASAVIASPLANKHSAYLSSGTWSLMGFESKMPYTTDEALAANITNEGGAEGRYRVLKNIMGLWLLQRVLKERRITDLPALIAQTEALPACRFLINPNDDRFINPDDMRAEIQAACRETDQPVPVSDAELARCIFDSLALLYADILHELANLRGEKFTQLHIVGGGCQNSLLNQLCADACGIRVMAGPVEASTLGNIGIQLMTLDELNNVDDFRQVVSANYDLTTYIPNPDSEIARHVAQFQPKRQTKELCA</sequence>
<comment type="function">
    <text evidence="1">Involved in the catabolism of L-rhamnose (6-deoxy-L-mannose). Catalyzes the transfer of the gamma-phosphate group from ATP to the 1-hydroxyl group of L-rhamnulose to yield L-rhamnulose 1-phosphate.</text>
</comment>
<comment type="catalytic activity">
    <reaction evidence="1">
        <text>L-rhamnulose + ATP = L-rhamnulose 1-phosphate + ADP + H(+)</text>
        <dbReference type="Rhea" id="RHEA:20117"/>
        <dbReference type="ChEBI" id="CHEBI:15378"/>
        <dbReference type="ChEBI" id="CHEBI:17897"/>
        <dbReference type="ChEBI" id="CHEBI:30616"/>
        <dbReference type="ChEBI" id="CHEBI:58313"/>
        <dbReference type="ChEBI" id="CHEBI:456216"/>
        <dbReference type="EC" id="2.7.1.5"/>
    </reaction>
</comment>
<comment type="cofactor">
    <cofactor evidence="1">
        <name>Mg(2+)</name>
        <dbReference type="ChEBI" id="CHEBI:18420"/>
    </cofactor>
</comment>
<comment type="pathway">
    <text evidence="1">Carbohydrate degradation; L-rhamnose degradation; glycerone phosphate from L-rhamnose: step 2/3.</text>
</comment>
<comment type="similarity">
    <text evidence="1">Belongs to the rhamnulokinase family.</text>
</comment>